<dbReference type="EMBL" id="AM295007">
    <property type="protein sequence ID" value="CAM30094.1"/>
    <property type="molecule type" value="Genomic_DNA"/>
</dbReference>
<dbReference type="RefSeq" id="WP_011888813.1">
    <property type="nucleotide sequence ID" value="NC_009332.1"/>
</dbReference>
<dbReference type="SMR" id="A2RE19"/>
<dbReference type="KEGG" id="spf:SpyM50764"/>
<dbReference type="HOGENOM" id="CLU_046981_0_0_9"/>
<dbReference type="Gene3D" id="1.20.1570.10">
    <property type="entry name" value="dip2346 domain like"/>
    <property type="match status" value="1"/>
</dbReference>
<dbReference type="Gene3D" id="3.10.630.10">
    <property type="entry name" value="dip2346 domain like"/>
    <property type="match status" value="1"/>
</dbReference>
<dbReference type="Gene3D" id="3.40.140.40">
    <property type="entry name" value="Domain of unknown function (DUF1846), C-terminal subdomain"/>
    <property type="match status" value="1"/>
</dbReference>
<dbReference type="HAMAP" id="MF_01567">
    <property type="entry name" value="UPF0371"/>
    <property type="match status" value="1"/>
</dbReference>
<dbReference type="InterPro" id="IPR014999">
    <property type="entry name" value="DUF1846"/>
</dbReference>
<dbReference type="InterPro" id="IPR048441">
    <property type="entry name" value="DUF1846_C"/>
</dbReference>
<dbReference type="InterPro" id="IPR048496">
    <property type="entry name" value="DUF1846_N"/>
</dbReference>
<dbReference type="NCBIfam" id="NF010184">
    <property type="entry name" value="PRK13663.1"/>
    <property type="match status" value="1"/>
</dbReference>
<dbReference type="Pfam" id="PF08903">
    <property type="entry name" value="DUF1846"/>
    <property type="match status" value="1"/>
</dbReference>
<dbReference type="Pfam" id="PF20921">
    <property type="entry name" value="DUF1846_C"/>
    <property type="match status" value="1"/>
</dbReference>
<dbReference type="PIRSF" id="PIRSF033132">
    <property type="entry name" value="DUF1846"/>
    <property type="match status" value="1"/>
</dbReference>
<proteinExistence type="inferred from homology"/>
<name>Y764_STRPG</name>
<reference key="1">
    <citation type="journal article" date="2007" name="J. Bacteriol.">
        <title>Complete genome of acute rheumatic fever-associated serotype M5 Streptococcus pyogenes strain Manfredo.</title>
        <authorList>
            <person name="Holden M.T.G."/>
            <person name="Scott A."/>
            <person name="Cherevach I."/>
            <person name="Chillingworth T."/>
            <person name="Churcher C."/>
            <person name="Cronin A."/>
            <person name="Dowd L."/>
            <person name="Feltwell T."/>
            <person name="Hamlin N."/>
            <person name="Holroyd S."/>
            <person name="Jagels K."/>
            <person name="Moule S."/>
            <person name="Mungall K."/>
            <person name="Quail M.A."/>
            <person name="Price C."/>
            <person name="Rabbinowitsch E."/>
            <person name="Sharp S."/>
            <person name="Skelton J."/>
            <person name="Whitehead S."/>
            <person name="Barrell B.G."/>
            <person name="Kehoe M."/>
            <person name="Parkhill J."/>
        </authorList>
    </citation>
    <scope>NUCLEOTIDE SEQUENCE [LARGE SCALE GENOMIC DNA]</scope>
    <source>
        <strain>Manfredo</strain>
    </source>
</reference>
<evidence type="ECO:0000255" key="1">
    <source>
        <dbReference type="HAMAP-Rule" id="MF_01567"/>
    </source>
</evidence>
<comment type="similarity">
    <text evidence="1">Belongs to the UPF0371 family.</text>
</comment>
<sequence>MKTIAFDSNKYLNLQRDHILERISQFDGKLYMEFGGKMLEDYHAARVLPGYEPDNKIKLLKELKEQVEIVIAINANNIEHSKARGDLGISYDQEVFRLIDKFNTLDIYVGSVVITQYNNQPAADAFRKQLEKNGIASYLHYPIKGYPTDINHIISSEGMGKNDYIKTSRNLIVVTAPGPGSGKLATCMSQMYHDQINGVKSGYAKFETFPVWNLPLHHPVNLAYEAATADLDDVNMIDPFHLETYGKTAVNYNRDIEVFPVLNRTFERILSKSPYASPTDMGVNMVGFSIVNEEAAIEASKQEIIRRYYQTLVDFKAERVTESAVKKIELLMNDIGVTPDDRHVTVAAHQKAEQTGQPALALQLPNGQIVTGKTSELFGPTAAVIINAIKTLAKIDKTTHLIEPEYVKPIQGLKVNHLGSHNPRLHSNEILIALAITAMTSEEANLAMKELGNLKGSEAHSTVILTEEDKNVLRKLGVNITFDPVYQHHKLYRK</sequence>
<protein>
    <recommendedName>
        <fullName evidence="1">UPF0371 protein SpyM50764</fullName>
    </recommendedName>
</protein>
<accession>A2RE19</accession>
<organism>
    <name type="scientific">Streptococcus pyogenes serotype M5 (strain Manfredo)</name>
    <dbReference type="NCBI Taxonomy" id="160491"/>
    <lineage>
        <taxon>Bacteria</taxon>
        <taxon>Bacillati</taxon>
        <taxon>Bacillota</taxon>
        <taxon>Bacilli</taxon>
        <taxon>Lactobacillales</taxon>
        <taxon>Streptococcaceae</taxon>
        <taxon>Streptococcus</taxon>
    </lineage>
</organism>
<feature type="chain" id="PRO_1000069098" description="UPF0371 protein SpyM50764">
    <location>
        <begin position="1"/>
        <end position="494"/>
    </location>
</feature>
<gene>
    <name type="ordered locus">SpyM50764</name>
</gene>